<dbReference type="EMBL" id="CP000575">
    <property type="protein sequence ID" value="ABN69921.1"/>
    <property type="molecule type" value="Genomic_DNA"/>
</dbReference>
<dbReference type="RefSeq" id="WP_011839112.1">
    <property type="nucleotide sequence ID" value="NC_009033.1"/>
</dbReference>
<dbReference type="SMR" id="A3DMR1"/>
<dbReference type="STRING" id="399550.Smar_0820"/>
<dbReference type="GeneID" id="4906577"/>
<dbReference type="KEGG" id="smr:Smar_0820"/>
<dbReference type="eggNOG" id="arCOG04245">
    <property type="taxonomic scope" value="Archaea"/>
</dbReference>
<dbReference type="HOGENOM" id="CLU_058171_3_0_2"/>
<dbReference type="OrthoDB" id="371797at2157"/>
<dbReference type="Proteomes" id="UP000000254">
    <property type="component" value="Chromosome"/>
</dbReference>
<dbReference type="GO" id="GO:0015935">
    <property type="term" value="C:small ribosomal subunit"/>
    <property type="evidence" value="ECO:0007669"/>
    <property type="project" value="InterPro"/>
</dbReference>
<dbReference type="GO" id="GO:0003735">
    <property type="term" value="F:structural constituent of ribosome"/>
    <property type="evidence" value="ECO:0007669"/>
    <property type="project" value="InterPro"/>
</dbReference>
<dbReference type="GO" id="GO:0006412">
    <property type="term" value="P:translation"/>
    <property type="evidence" value="ECO:0007669"/>
    <property type="project" value="UniProtKB-UniRule"/>
</dbReference>
<dbReference type="CDD" id="cd01425">
    <property type="entry name" value="RPS2"/>
    <property type="match status" value="1"/>
</dbReference>
<dbReference type="FunFam" id="3.40.50.10490:FF:000030">
    <property type="entry name" value="30S ribosomal protein S2"/>
    <property type="match status" value="1"/>
</dbReference>
<dbReference type="Gene3D" id="3.40.50.10490">
    <property type="entry name" value="Glucose-6-phosphate isomerase like protein, domain 1"/>
    <property type="match status" value="1"/>
</dbReference>
<dbReference type="HAMAP" id="MF_00291_A">
    <property type="entry name" value="Ribosomal_uS2_A"/>
    <property type="match status" value="1"/>
</dbReference>
<dbReference type="InterPro" id="IPR001865">
    <property type="entry name" value="Ribosomal_uS2"/>
</dbReference>
<dbReference type="InterPro" id="IPR023454">
    <property type="entry name" value="Ribosomal_uS2_arc"/>
</dbReference>
<dbReference type="InterPro" id="IPR018130">
    <property type="entry name" value="Ribosomal_uS2_CS"/>
</dbReference>
<dbReference type="InterPro" id="IPR005707">
    <property type="entry name" value="Ribosomal_uS2_euk/arc"/>
</dbReference>
<dbReference type="InterPro" id="IPR023591">
    <property type="entry name" value="Ribosomal_uS2_flav_dom_sf"/>
</dbReference>
<dbReference type="NCBIfam" id="TIGR01012">
    <property type="entry name" value="uS2_euk_arch"/>
    <property type="match status" value="1"/>
</dbReference>
<dbReference type="PANTHER" id="PTHR11489">
    <property type="entry name" value="40S RIBOSOMAL PROTEIN SA"/>
    <property type="match status" value="1"/>
</dbReference>
<dbReference type="Pfam" id="PF00318">
    <property type="entry name" value="Ribosomal_S2"/>
    <property type="match status" value="2"/>
</dbReference>
<dbReference type="PRINTS" id="PR00395">
    <property type="entry name" value="RIBOSOMALS2"/>
</dbReference>
<dbReference type="SUPFAM" id="SSF52313">
    <property type="entry name" value="Ribosomal protein S2"/>
    <property type="match status" value="1"/>
</dbReference>
<dbReference type="PROSITE" id="PS00962">
    <property type="entry name" value="RIBOSOMAL_S2_1"/>
    <property type="match status" value="1"/>
</dbReference>
<dbReference type="PROSITE" id="PS00963">
    <property type="entry name" value="RIBOSOMAL_S2_2"/>
    <property type="match status" value="1"/>
</dbReference>
<evidence type="ECO:0000255" key="1">
    <source>
        <dbReference type="HAMAP-Rule" id="MF_00291"/>
    </source>
</evidence>
<evidence type="ECO:0000256" key="2">
    <source>
        <dbReference type="SAM" id="MobiDB-lite"/>
    </source>
</evidence>
<evidence type="ECO:0000305" key="3"/>
<keyword id="KW-1185">Reference proteome</keyword>
<keyword id="KW-0687">Ribonucleoprotein</keyword>
<keyword id="KW-0689">Ribosomal protein</keyword>
<protein>
    <recommendedName>
        <fullName evidence="1">Small ribosomal subunit protein uS2</fullName>
    </recommendedName>
    <alternativeName>
        <fullName evidence="3">30S ribosomal protein S2</fullName>
    </alternativeName>
</protein>
<name>RS2_STAMF</name>
<gene>
    <name evidence="1" type="primary">rps2</name>
    <name type="ordered locus">Smar_0820</name>
</gene>
<proteinExistence type="inferred from homology"/>
<feature type="chain" id="PRO_0000352080" description="Small ribosomal subunit protein uS2">
    <location>
        <begin position="1"/>
        <end position="220"/>
    </location>
</feature>
<feature type="region of interest" description="Disordered" evidence="2">
    <location>
        <begin position="201"/>
        <end position="220"/>
    </location>
</feature>
<reference key="1">
    <citation type="journal article" date="2009" name="BMC Genomics">
        <title>The complete genome sequence of Staphylothermus marinus reveals differences in sulfur metabolism among heterotrophic Crenarchaeota.</title>
        <authorList>
            <person name="Anderson I.J."/>
            <person name="Dharmarajan L."/>
            <person name="Rodriguez J."/>
            <person name="Hooper S."/>
            <person name="Porat I."/>
            <person name="Ulrich L.E."/>
            <person name="Elkins J.G."/>
            <person name="Mavromatis K."/>
            <person name="Sun H."/>
            <person name="Land M."/>
            <person name="Lapidus A."/>
            <person name="Lucas S."/>
            <person name="Barry K."/>
            <person name="Huber H."/>
            <person name="Zhulin I.B."/>
            <person name="Whitman W.B."/>
            <person name="Mukhopadhyay B."/>
            <person name="Woese C."/>
            <person name="Bristow J."/>
            <person name="Kyrpides N."/>
        </authorList>
    </citation>
    <scope>NUCLEOTIDE SEQUENCE [LARGE SCALE GENOMIC DNA]</scope>
    <source>
        <strain>ATCC 43588 / DSM 3639 / JCM 9404 / F1</strain>
    </source>
</reference>
<reference key="2">
    <citation type="journal article" date="2009" name="Stand. Genomic Sci.">
        <title>Complete genome sequence of Staphylothermus marinus Stetter and Fiala 1986 type strain F1.</title>
        <authorList>
            <person name="Anderson I.J."/>
            <person name="Sun H."/>
            <person name="Lapidus A."/>
            <person name="Copeland A."/>
            <person name="Glavina Del Rio T."/>
            <person name="Tice H."/>
            <person name="Dalin E."/>
            <person name="Lucas S."/>
            <person name="Barry K."/>
            <person name="Land M."/>
            <person name="Richardson P."/>
            <person name="Huber H."/>
            <person name="Kyrpides N.C."/>
        </authorList>
    </citation>
    <scope>NUCLEOTIDE SEQUENCE [LARGE SCALE GENOMIC DNA]</scope>
    <source>
        <strain>ATCC 43588 / DSM 3639 / JCM 9404 / F1</strain>
    </source>
</reference>
<accession>A3DMR1</accession>
<sequence length="220" mass="25082">MAQEQPKNNEKSAEKTQTKPVIELLIPLEKYLAAGVHIGTHICTKFMEPFVYRVRNDGLYILDVRKIDERIRIAAKFLSRYEPSKIAAVSVRTYGQKPVVKFCNYVGCKPFTGRFMPGTFTNPSLKWYFEPDIVLLTDPRADSQALKEAAEIGIPIVSLADTDNRTEYIDLIIPANNKGRKSLALIYWLLARQILRERGLLPPDGDLPEPPSEFEVKFKR</sequence>
<comment type="similarity">
    <text evidence="1">Belongs to the universal ribosomal protein uS2 family.</text>
</comment>
<organism>
    <name type="scientific">Staphylothermus marinus (strain ATCC 43588 / DSM 3639 / JCM 9404 / F1)</name>
    <dbReference type="NCBI Taxonomy" id="399550"/>
    <lineage>
        <taxon>Archaea</taxon>
        <taxon>Thermoproteota</taxon>
        <taxon>Thermoprotei</taxon>
        <taxon>Desulfurococcales</taxon>
        <taxon>Desulfurococcaceae</taxon>
        <taxon>Staphylothermus</taxon>
    </lineage>
</organism>